<proteinExistence type="inferred from homology"/>
<dbReference type="EC" id="2.1.1.177" evidence="1"/>
<dbReference type="EMBL" id="CU928164">
    <property type="protein sequence ID" value="CAR16748.1"/>
    <property type="molecule type" value="Genomic_DNA"/>
</dbReference>
<dbReference type="RefSeq" id="WP_000776104.1">
    <property type="nucleotide sequence ID" value="NC_011750.1"/>
</dbReference>
<dbReference type="RefSeq" id="YP_002406637.1">
    <property type="nucleotide sequence ID" value="NC_011750.1"/>
</dbReference>
<dbReference type="SMR" id="B7NLZ5"/>
<dbReference type="STRING" id="585057.ECIAI39_0611"/>
<dbReference type="GeneID" id="93776846"/>
<dbReference type="KEGG" id="ect:ECIAI39_0611"/>
<dbReference type="PATRIC" id="fig|585057.6.peg.650"/>
<dbReference type="HOGENOM" id="CLU_100552_1_0_6"/>
<dbReference type="Proteomes" id="UP000000749">
    <property type="component" value="Chromosome"/>
</dbReference>
<dbReference type="GO" id="GO:0005737">
    <property type="term" value="C:cytoplasm"/>
    <property type="evidence" value="ECO:0007669"/>
    <property type="project" value="UniProtKB-SubCell"/>
</dbReference>
<dbReference type="GO" id="GO:0070038">
    <property type="term" value="F:rRNA (pseudouridine-N3-)-methyltransferase activity"/>
    <property type="evidence" value="ECO:0007669"/>
    <property type="project" value="UniProtKB-UniRule"/>
</dbReference>
<dbReference type="CDD" id="cd18081">
    <property type="entry name" value="RlmH-like"/>
    <property type="match status" value="1"/>
</dbReference>
<dbReference type="FunFam" id="3.40.1280.10:FF:000004">
    <property type="entry name" value="Ribosomal RNA large subunit methyltransferase H"/>
    <property type="match status" value="1"/>
</dbReference>
<dbReference type="Gene3D" id="3.40.1280.10">
    <property type="match status" value="1"/>
</dbReference>
<dbReference type="HAMAP" id="MF_00658">
    <property type="entry name" value="23SrRNA_methyltr_H"/>
    <property type="match status" value="1"/>
</dbReference>
<dbReference type="InterPro" id="IPR029028">
    <property type="entry name" value="Alpha/beta_knot_MTases"/>
</dbReference>
<dbReference type="InterPro" id="IPR003742">
    <property type="entry name" value="RlmH-like"/>
</dbReference>
<dbReference type="InterPro" id="IPR029026">
    <property type="entry name" value="tRNA_m1G_MTases_N"/>
</dbReference>
<dbReference type="NCBIfam" id="NF000984">
    <property type="entry name" value="PRK00103.1-1"/>
    <property type="match status" value="1"/>
</dbReference>
<dbReference type="NCBIfam" id="NF000986">
    <property type="entry name" value="PRK00103.1-4"/>
    <property type="match status" value="1"/>
</dbReference>
<dbReference type="NCBIfam" id="TIGR00246">
    <property type="entry name" value="tRNA_RlmH_YbeA"/>
    <property type="match status" value="1"/>
</dbReference>
<dbReference type="PANTHER" id="PTHR33603">
    <property type="entry name" value="METHYLTRANSFERASE"/>
    <property type="match status" value="1"/>
</dbReference>
<dbReference type="PANTHER" id="PTHR33603:SF1">
    <property type="entry name" value="RIBOSOMAL RNA LARGE SUBUNIT METHYLTRANSFERASE H"/>
    <property type="match status" value="1"/>
</dbReference>
<dbReference type="Pfam" id="PF02590">
    <property type="entry name" value="SPOUT_MTase"/>
    <property type="match status" value="1"/>
</dbReference>
<dbReference type="PIRSF" id="PIRSF004505">
    <property type="entry name" value="MT_bac"/>
    <property type="match status" value="1"/>
</dbReference>
<dbReference type="SUPFAM" id="SSF75217">
    <property type="entry name" value="alpha/beta knot"/>
    <property type="match status" value="1"/>
</dbReference>
<accession>B7NLZ5</accession>
<sequence>MKLQLVAVGTKMPDWVQTGFTEYLRRFPKDMPFELIEIPAGKRGKNADIKRILDKEGEQMLAAAGKNRIVTLDIPGKPWDTPQLAAELERWKLDGRDVSLLIGGPEGLSPACKAAAEQSWSLSALTLPHPLVRVLVAESLYRAWSITTNHPYHRE</sequence>
<reference key="1">
    <citation type="journal article" date="2009" name="PLoS Genet.">
        <title>Organised genome dynamics in the Escherichia coli species results in highly diverse adaptive paths.</title>
        <authorList>
            <person name="Touchon M."/>
            <person name="Hoede C."/>
            <person name="Tenaillon O."/>
            <person name="Barbe V."/>
            <person name="Baeriswyl S."/>
            <person name="Bidet P."/>
            <person name="Bingen E."/>
            <person name="Bonacorsi S."/>
            <person name="Bouchier C."/>
            <person name="Bouvet O."/>
            <person name="Calteau A."/>
            <person name="Chiapello H."/>
            <person name="Clermont O."/>
            <person name="Cruveiller S."/>
            <person name="Danchin A."/>
            <person name="Diard M."/>
            <person name="Dossat C."/>
            <person name="Karoui M.E."/>
            <person name="Frapy E."/>
            <person name="Garry L."/>
            <person name="Ghigo J.M."/>
            <person name="Gilles A.M."/>
            <person name="Johnson J."/>
            <person name="Le Bouguenec C."/>
            <person name="Lescat M."/>
            <person name="Mangenot S."/>
            <person name="Martinez-Jehanne V."/>
            <person name="Matic I."/>
            <person name="Nassif X."/>
            <person name="Oztas S."/>
            <person name="Petit M.A."/>
            <person name="Pichon C."/>
            <person name="Rouy Z."/>
            <person name="Ruf C.S."/>
            <person name="Schneider D."/>
            <person name="Tourret J."/>
            <person name="Vacherie B."/>
            <person name="Vallenet D."/>
            <person name="Medigue C."/>
            <person name="Rocha E.P.C."/>
            <person name="Denamur E."/>
        </authorList>
    </citation>
    <scope>NUCLEOTIDE SEQUENCE [LARGE SCALE GENOMIC DNA]</scope>
    <source>
        <strain>IAI39 / ExPEC</strain>
    </source>
</reference>
<name>RLMH_ECO7I</name>
<evidence type="ECO:0000255" key="1">
    <source>
        <dbReference type="HAMAP-Rule" id="MF_00658"/>
    </source>
</evidence>
<organism>
    <name type="scientific">Escherichia coli O7:K1 (strain IAI39 / ExPEC)</name>
    <dbReference type="NCBI Taxonomy" id="585057"/>
    <lineage>
        <taxon>Bacteria</taxon>
        <taxon>Pseudomonadati</taxon>
        <taxon>Pseudomonadota</taxon>
        <taxon>Gammaproteobacteria</taxon>
        <taxon>Enterobacterales</taxon>
        <taxon>Enterobacteriaceae</taxon>
        <taxon>Escherichia</taxon>
    </lineage>
</organism>
<keyword id="KW-0963">Cytoplasm</keyword>
<keyword id="KW-0489">Methyltransferase</keyword>
<keyword id="KW-0698">rRNA processing</keyword>
<keyword id="KW-0949">S-adenosyl-L-methionine</keyword>
<keyword id="KW-0808">Transferase</keyword>
<comment type="function">
    <text evidence="1">Specifically methylates the pseudouridine at position 1915 (m3Psi1915) in 23S rRNA.</text>
</comment>
<comment type="catalytic activity">
    <reaction evidence="1">
        <text>pseudouridine(1915) in 23S rRNA + S-adenosyl-L-methionine = N(3)-methylpseudouridine(1915) in 23S rRNA + S-adenosyl-L-homocysteine + H(+)</text>
        <dbReference type="Rhea" id="RHEA:42752"/>
        <dbReference type="Rhea" id="RHEA-COMP:10221"/>
        <dbReference type="Rhea" id="RHEA-COMP:10222"/>
        <dbReference type="ChEBI" id="CHEBI:15378"/>
        <dbReference type="ChEBI" id="CHEBI:57856"/>
        <dbReference type="ChEBI" id="CHEBI:59789"/>
        <dbReference type="ChEBI" id="CHEBI:65314"/>
        <dbReference type="ChEBI" id="CHEBI:74486"/>
        <dbReference type="EC" id="2.1.1.177"/>
    </reaction>
</comment>
<comment type="subunit">
    <text evidence="1">Homodimer.</text>
</comment>
<comment type="subcellular location">
    <subcellularLocation>
        <location evidence="1">Cytoplasm</location>
    </subcellularLocation>
</comment>
<comment type="similarity">
    <text evidence="1">Belongs to the RNA methyltransferase RlmH family.</text>
</comment>
<protein>
    <recommendedName>
        <fullName evidence="1">Ribosomal RNA large subunit methyltransferase H</fullName>
        <ecNumber evidence="1">2.1.1.177</ecNumber>
    </recommendedName>
    <alternativeName>
        <fullName evidence="1">23S rRNA (pseudouridine1915-N3)-methyltransferase</fullName>
    </alternativeName>
    <alternativeName>
        <fullName evidence="1">23S rRNA m3Psi1915 methyltransferase</fullName>
    </alternativeName>
    <alternativeName>
        <fullName evidence="1">rRNA (pseudouridine-N3-)-methyltransferase RlmH</fullName>
    </alternativeName>
</protein>
<gene>
    <name evidence="1" type="primary">rlmH</name>
    <name type="ordered locus">ECIAI39_0611</name>
</gene>
<feature type="chain" id="PRO_1000131230" description="Ribosomal RNA large subunit methyltransferase H">
    <location>
        <begin position="1"/>
        <end position="155"/>
    </location>
</feature>
<feature type="binding site" evidence="1">
    <location>
        <position position="72"/>
    </location>
    <ligand>
        <name>S-adenosyl-L-methionine</name>
        <dbReference type="ChEBI" id="CHEBI:59789"/>
    </ligand>
</feature>
<feature type="binding site" evidence="1">
    <location>
        <position position="103"/>
    </location>
    <ligand>
        <name>S-adenosyl-L-methionine</name>
        <dbReference type="ChEBI" id="CHEBI:59789"/>
    </ligand>
</feature>
<feature type="binding site" evidence="1">
    <location>
        <begin position="122"/>
        <end position="127"/>
    </location>
    <ligand>
        <name>S-adenosyl-L-methionine</name>
        <dbReference type="ChEBI" id="CHEBI:59789"/>
    </ligand>
</feature>